<accession>Q13RD3</accession>
<protein>
    <recommendedName>
        <fullName evidence="1">Aliphatic sulfonates import ATP-binding protein SsuB 2</fullName>
        <ecNumber evidence="1">7.6.2.14</ecNumber>
    </recommendedName>
</protein>
<sequence length="247" mass="26900">MSIDFALPQDAAIPAAAEERVNRTPLAVSVRGLQRRYGARVVIDALDLDIREGEFVTLLGESGCGKTTLLRALAGLDQPDAGQIRAPERPSVVFQEHRLLPWATLWENVVLGHETTIGRVGATRALAEVGLSGREDDWPRNLSGGQAQRVALARGLVRDPALLLLDEPFAALDALTRIKMHGLVKELVARHHPGVLLVTHDVDEALTLADRILVMRSGRIAASFHPKNHTPQALRPILLEELGVQSH</sequence>
<gene>
    <name evidence="1" type="primary">ssuB2</name>
    <name type="ordered locus">Bxeno_B0388</name>
    <name type="ORF">Bxe_B2637</name>
</gene>
<feature type="chain" id="PRO_0000279907" description="Aliphatic sulfonates import ATP-binding protein SsuB 2">
    <location>
        <begin position="1"/>
        <end position="247"/>
    </location>
</feature>
<feature type="domain" description="ABC transporter" evidence="1">
    <location>
        <begin position="28"/>
        <end position="242"/>
    </location>
</feature>
<feature type="binding site" evidence="1">
    <location>
        <begin position="60"/>
        <end position="67"/>
    </location>
    <ligand>
        <name>ATP</name>
        <dbReference type="ChEBI" id="CHEBI:30616"/>
    </ligand>
</feature>
<dbReference type="EC" id="7.6.2.14" evidence="1"/>
<dbReference type="EMBL" id="CP000271">
    <property type="protein sequence ID" value="ABE33356.1"/>
    <property type="molecule type" value="Genomic_DNA"/>
</dbReference>
<dbReference type="RefSeq" id="WP_011490725.1">
    <property type="nucleotide sequence ID" value="NC_007952.1"/>
</dbReference>
<dbReference type="SMR" id="Q13RD3"/>
<dbReference type="STRING" id="266265.Bxe_B2637"/>
<dbReference type="KEGG" id="bxb:DR64_4970"/>
<dbReference type="KEGG" id="bxe:Bxe_B2637"/>
<dbReference type="PATRIC" id="fig|266265.5.peg.5065"/>
<dbReference type="eggNOG" id="COG1116">
    <property type="taxonomic scope" value="Bacteria"/>
</dbReference>
<dbReference type="OrthoDB" id="9783039at2"/>
<dbReference type="Proteomes" id="UP000001817">
    <property type="component" value="Chromosome 2"/>
</dbReference>
<dbReference type="GO" id="GO:0005886">
    <property type="term" value="C:plasma membrane"/>
    <property type="evidence" value="ECO:0007669"/>
    <property type="project" value="UniProtKB-SubCell"/>
</dbReference>
<dbReference type="GO" id="GO:0005524">
    <property type="term" value="F:ATP binding"/>
    <property type="evidence" value="ECO:0007669"/>
    <property type="project" value="UniProtKB-KW"/>
</dbReference>
<dbReference type="GO" id="GO:0016887">
    <property type="term" value="F:ATP hydrolysis activity"/>
    <property type="evidence" value="ECO:0007669"/>
    <property type="project" value="InterPro"/>
</dbReference>
<dbReference type="Gene3D" id="3.40.50.300">
    <property type="entry name" value="P-loop containing nucleotide triphosphate hydrolases"/>
    <property type="match status" value="1"/>
</dbReference>
<dbReference type="InterPro" id="IPR003593">
    <property type="entry name" value="AAA+_ATPase"/>
</dbReference>
<dbReference type="InterPro" id="IPR003439">
    <property type="entry name" value="ABC_transporter-like_ATP-bd"/>
</dbReference>
<dbReference type="InterPro" id="IPR017871">
    <property type="entry name" value="ABC_transporter-like_CS"/>
</dbReference>
<dbReference type="InterPro" id="IPR050166">
    <property type="entry name" value="ABC_transporter_ATP-bind"/>
</dbReference>
<dbReference type="InterPro" id="IPR027417">
    <property type="entry name" value="P-loop_NTPase"/>
</dbReference>
<dbReference type="PANTHER" id="PTHR42788:SF17">
    <property type="entry name" value="ALIPHATIC SULFONATES IMPORT ATP-BINDING PROTEIN SSUB"/>
    <property type="match status" value="1"/>
</dbReference>
<dbReference type="PANTHER" id="PTHR42788">
    <property type="entry name" value="TAURINE IMPORT ATP-BINDING PROTEIN-RELATED"/>
    <property type="match status" value="1"/>
</dbReference>
<dbReference type="Pfam" id="PF00005">
    <property type="entry name" value="ABC_tran"/>
    <property type="match status" value="1"/>
</dbReference>
<dbReference type="SMART" id="SM00382">
    <property type="entry name" value="AAA"/>
    <property type="match status" value="1"/>
</dbReference>
<dbReference type="SUPFAM" id="SSF52540">
    <property type="entry name" value="P-loop containing nucleoside triphosphate hydrolases"/>
    <property type="match status" value="1"/>
</dbReference>
<dbReference type="PROSITE" id="PS00211">
    <property type="entry name" value="ABC_TRANSPORTER_1"/>
    <property type="match status" value="1"/>
</dbReference>
<dbReference type="PROSITE" id="PS50893">
    <property type="entry name" value="ABC_TRANSPORTER_2"/>
    <property type="match status" value="1"/>
</dbReference>
<dbReference type="PROSITE" id="PS51291">
    <property type="entry name" value="SSUB"/>
    <property type="match status" value="1"/>
</dbReference>
<keyword id="KW-0067">ATP-binding</keyword>
<keyword id="KW-0997">Cell inner membrane</keyword>
<keyword id="KW-1003">Cell membrane</keyword>
<keyword id="KW-0472">Membrane</keyword>
<keyword id="KW-0547">Nucleotide-binding</keyword>
<keyword id="KW-1185">Reference proteome</keyword>
<keyword id="KW-1278">Translocase</keyword>
<keyword id="KW-0813">Transport</keyword>
<evidence type="ECO:0000255" key="1">
    <source>
        <dbReference type="HAMAP-Rule" id="MF_01724"/>
    </source>
</evidence>
<proteinExistence type="inferred from homology"/>
<name>SSUB2_PARXL</name>
<organism>
    <name type="scientific">Paraburkholderia xenovorans (strain LB400)</name>
    <dbReference type="NCBI Taxonomy" id="266265"/>
    <lineage>
        <taxon>Bacteria</taxon>
        <taxon>Pseudomonadati</taxon>
        <taxon>Pseudomonadota</taxon>
        <taxon>Betaproteobacteria</taxon>
        <taxon>Burkholderiales</taxon>
        <taxon>Burkholderiaceae</taxon>
        <taxon>Paraburkholderia</taxon>
    </lineage>
</organism>
<reference key="1">
    <citation type="journal article" date="2006" name="Proc. Natl. Acad. Sci. U.S.A.">
        <title>Burkholderia xenovorans LB400 harbors a multi-replicon, 9.73-Mbp genome shaped for versatility.</title>
        <authorList>
            <person name="Chain P.S.G."/>
            <person name="Denef V.J."/>
            <person name="Konstantinidis K.T."/>
            <person name="Vergez L.M."/>
            <person name="Agullo L."/>
            <person name="Reyes V.L."/>
            <person name="Hauser L."/>
            <person name="Cordova M."/>
            <person name="Gomez L."/>
            <person name="Gonzalez M."/>
            <person name="Land M."/>
            <person name="Lao V."/>
            <person name="Larimer F."/>
            <person name="LiPuma J.J."/>
            <person name="Mahenthiralingam E."/>
            <person name="Malfatti S.A."/>
            <person name="Marx C.J."/>
            <person name="Parnell J.J."/>
            <person name="Ramette A."/>
            <person name="Richardson P."/>
            <person name="Seeger M."/>
            <person name="Smith D."/>
            <person name="Spilker T."/>
            <person name="Sul W.J."/>
            <person name="Tsoi T.V."/>
            <person name="Ulrich L.E."/>
            <person name="Zhulin I.B."/>
            <person name="Tiedje J.M."/>
        </authorList>
    </citation>
    <scope>NUCLEOTIDE SEQUENCE [LARGE SCALE GENOMIC DNA]</scope>
    <source>
        <strain>LB400</strain>
    </source>
</reference>
<comment type="function">
    <text evidence="1">Part of the ABC transporter complex SsuABC involved in aliphatic sulfonates import. Responsible for energy coupling to the transport system.</text>
</comment>
<comment type="catalytic activity">
    <reaction evidence="1">
        <text>ATP + H2O + aliphatic sulfonate-[sulfonate-binding protein]Side 1 = ADP + phosphate + aliphatic sulfonateSide 2 + [sulfonate-binding protein]Side 1.</text>
        <dbReference type="EC" id="7.6.2.14"/>
    </reaction>
</comment>
<comment type="subunit">
    <text evidence="1">The complex is composed of two ATP-binding proteins (SsuB), two transmembrane proteins (SsuC) and a solute-binding protein (SsuA).</text>
</comment>
<comment type="subcellular location">
    <subcellularLocation>
        <location evidence="1">Cell inner membrane</location>
        <topology evidence="1">Peripheral membrane protein</topology>
    </subcellularLocation>
</comment>
<comment type="similarity">
    <text evidence="1">Belongs to the ABC transporter superfamily. Aliphatic sulfonates importer (TC 3.A.1.17.2) family.</text>
</comment>